<proteinExistence type="inferred from homology"/>
<sequence>MAVPKKKTSKSRRNMRRSHLALGKVNVIVDSQTGEYKLPHHVSLVDGTYNNRQVVTKRIETEEAVA</sequence>
<keyword id="KW-0687">Ribonucleoprotein</keyword>
<keyword id="KW-0689">Ribosomal protein</keyword>
<gene>
    <name evidence="1" type="primary">rpmF</name>
    <name type="ordered locus">A1C_06020</name>
</gene>
<dbReference type="EMBL" id="CP000847">
    <property type="protein sequence ID" value="ABV75437.1"/>
    <property type="molecule type" value="Genomic_DNA"/>
</dbReference>
<dbReference type="RefSeq" id="WP_012150066.1">
    <property type="nucleotide sequence ID" value="NC_009881.1"/>
</dbReference>
<dbReference type="SMR" id="A8GPW2"/>
<dbReference type="STRING" id="293614.A1C_06020"/>
<dbReference type="KEGG" id="rak:A1C_06020"/>
<dbReference type="eggNOG" id="COG0333">
    <property type="taxonomic scope" value="Bacteria"/>
</dbReference>
<dbReference type="HOGENOM" id="CLU_129084_2_0_5"/>
<dbReference type="Proteomes" id="UP000006830">
    <property type="component" value="Chromosome"/>
</dbReference>
<dbReference type="GO" id="GO:0015934">
    <property type="term" value="C:large ribosomal subunit"/>
    <property type="evidence" value="ECO:0007669"/>
    <property type="project" value="InterPro"/>
</dbReference>
<dbReference type="GO" id="GO:0003735">
    <property type="term" value="F:structural constituent of ribosome"/>
    <property type="evidence" value="ECO:0007669"/>
    <property type="project" value="InterPro"/>
</dbReference>
<dbReference type="GO" id="GO:0006412">
    <property type="term" value="P:translation"/>
    <property type="evidence" value="ECO:0007669"/>
    <property type="project" value="UniProtKB-UniRule"/>
</dbReference>
<dbReference type="Gene3D" id="1.20.5.640">
    <property type="entry name" value="Single helix bin"/>
    <property type="match status" value="1"/>
</dbReference>
<dbReference type="HAMAP" id="MF_00340">
    <property type="entry name" value="Ribosomal_bL32"/>
    <property type="match status" value="1"/>
</dbReference>
<dbReference type="InterPro" id="IPR002677">
    <property type="entry name" value="Ribosomal_bL32"/>
</dbReference>
<dbReference type="InterPro" id="IPR044957">
    <property type="entry name" value="Ribosomal_bL32_bact"/>
</dbReference>
<dbReference type="InterPro" id="IPR011332">
    <property type="entry name" value="Ribosomal_zn-bd"/>
</dbReference>
<dbReference type="NCBIfam" id="TIGR01031">
    <property type="entry name" value="rpmF_bact"/>
    <property type="match status" value="1"/>
</dbReference>
<dbReference type="PANTHER" id="PTHR35534">
    <property type="entry name" value="50S RIBOSOMAL PROTEIN L32"/>
    <property type="match status" value="1"/>
</dbReference>
<dbReference type="PANTHER" id="PTHR35534:SF1">
    <property type="entry name" value="LARGE RIBOSOMAL SUBUNIT PROTEIN BL32"/>
    <property type="match status" value="1"/>
</dbReference>
<dbReference type="Pfam" id="PF01783">
    <property type="entry name" value="Ribosomal_L32p"/>
    <property type="match status" value="1"/>
</dbReference>
<dbReference type="SUPFAM" id="SSF57829">
    <property type="entry name" value="Zn-binding ribosomal proteins"/>
    <property type="match status" value="1"/>
</dbReference>
<evidence type="ECO:0000255" key="1">
    <source>
        <dbReference type="HAMAP-Rule" id="MF_00340"/>
    </source>
</evidence>
<evidence type="ECO:0000305" key="2"/>
<reference key="1">
    <citation type="submission" date="2007-09" db="EMBL/GenBank/DDBJ databases">
        <title>Complete genome sequence of Rickettsia akari.</title>
        <authorList>
            <person name="Madan A."/>
            <person name="Fahey J."/>
            <person name="Helton E."/>
            <person name="Ketteman M."/>
            <person name="Madan A."/>
            <person name="Rodrigues S."/>
            <person name="Sanchez A."/>
            <person name="Whiting M."/>
            <person name="Dasch G."/>
            <person name="Eremeeva M."/>
        </authorList>
    </citation>
    <scope>NUCLEOTIDE SEQUENCE [LARGE SCALE GENOMIC DNA]</scope>
    <source>
        <strain>Hartford</strain>
    </source>
</reference>
<protein>
    <recommendedName>
        <fullName evidence="1">Large ribosomal subunit protein bL32</fullName>
    </recommendedName>
    <alternativeName>
        <fullName evidence="2">50S ribosomal protein L32</fullName>
    </alternativeName>
</protein>
<name>RL32_RICAH</name>
<accession>A8GPW2</accession>
<organism>
    <name type="scientific">Rickettsia akari (strain Hartford)</name>
    <dbReference type="NCBI Taxonomy" id="293614"/>
    <lineage>
        <taxon>Bacteria</taxon>
        <taxon>Pseudomonadati</taxon>
        <taxon>Pseudomonadota</taxon>
        <taxon>Alphaproteobacteria</taxon>
        <taxon>Rickettsiales</taxon>
        <taxon>Rickettsiaceae</taxon>
        <taxon>Rickettsieae</taxon>
        <taxon>Rickettsia</taxon>
        <taxon>spotted fever group</taxon>
    </lineage>
</organism>
<feature type="chain" id="PRO_1000005073" description="Large ribosomal subunit protein bL32">
    <location>
        <begin position="1"/>
        <end position="66"/>
    </location>
</feature>
<comment type="similarity">
    <text evidence="1">Belongs to the bacterial ribosomal protein bL32 family.</text>
</comment>